<proteinExistence type="inferred from homology"/>
<name>YPHC_ECOLI</name>
<protein>
    <recommendedName>
        <fullName>Uncharacterized zinc-type alcohol dehydrogenase-like protein YphC</fullName>
        <ecNumber>1.-.-.-</ecNumber>
    </recommendedName>
</protein>
<evidence type="ECO:0000250" key="1"/>
<evidence type="ECO:0000305" key="2"/>
<gene>
    <name type="primary">yphC</name>
    <name type="ordered locus">b2545</name>
    <name type="ordered locus">JW5842</name>
</gene>
<feature type="chain" id="PRO_0000160899" description="Uncharacterized zinc-type alcohol dehydrogenase-like protein YphC">
    <location>
        <begin position="1"/>
        <end position="353"/>
    </location>
</feature>
<feature type="binding site" evidence="1">
    <location>
        <position position="40"/>
    </location>
    <ligand>
        <name>Zn(2+)</name>
        <dbReference type="ChEBI" id="CHEBI:29105"/>
        <label>1</label>
        <note>catalytic</note>
    </ligand>
</feature>
<feature type="binding site" evidence="1">
    <location>
        <position position="70"/>
    </location>
    <ligand>
        <name>Zn(2+)</name>
        <dbReference type="ChEBI" id="CHEBI:29105"/>
        <label>1</label>
        <note>catalytic</note>
    </ligand>
</feature>
<feature type="binding site" evidence="1">
    <location>
        <position position="100"/>
    </location>
    <ligand>
        <name>Zn(2+)</name>
        <dbReference type="ChEBI" id="CHEBI:29105"/>
        <label>2</label>
    </ligand>
</feature>
<feature type="binding site" evidence="1">
    <location>
        <position position="103"/>
    </location>
    <ligand>
        <name>Zn(2+)</name>
        <dbReference type="ChEBI" id="CHEBI:29105"/>
        <label>2</label>
    </ligand>
</feature>
<feature type="binding site" evidence="1">
    <location>
        <position position="106"/>
    </location>
    <ligand>
        <name>Zn(2+)</name>
        <dbReference type="ChEBI" id="CHEBI:29105"/>
        <label>2</label>
    </ligand>
</feature>
<feature type="binding site" evidence="1">
    <location>
        <position position="114"/>
    </location>
    <ligand>
        <name>Zn(2+)</name>
        <dbReference type="ChEBI" id="CHEBI:29105"/>
        <label>2</label>
    </ligand>
</feature>
<feature type="binding site" evidence="1">
    <location>
        <position position="158"/>
    </location>
    <ligand>
        <name>Zn(2+)</name>
        <dbReference type="ChEBI" id="CHEBI:29105"/>
        <label>1</label>
        <note>catalytic</note>
    </ligand>
</feature>
<organism>
    <name type="scientific">Escherichia coli (strain K12)</name>
    <dbReference type="NCBI Taxonomy" id="83333"/>
    <lineage>
        <taxon>Bacteria</taxon>
        <taxon>Pseudomonadati</taxon>
        <taxon>Pseudomonadota</taxon>
        <taxon>Gammaproteobacteria</taxon>
        <taxon>Enterobacterales</taxon>
        <taxon>Enterobacteriaceae</taxon>
        <taxon>Escherichia</taxon>
    </lineage>
</organism>
<dbReference type="EC" id="1.-.-.-"/>
<dbReference type="EMBL" id="U00096">
    <property type="protein sequence ID" value="AAC75598.2"/>
    <property type="molecule type" value="Genomic_DNA"/>
</dbReference>
<dbReference type="EMBL" id="AP009048">
    <property type="protein sequence ID" value="BAA16447.2"/>
    <property type="molecule type" value="Genomic_DNA"/>
</dbReference>
<dbReference type="PIR" id="H65031">
    <property type="entry name" value="H65031"/>
</dbReference>
<dbReference type="RefSeq" id="NP_417040.2">
    <property type="nucleotide sequence ID" value="NC_000913.3"/>
</dbReference>
<dbReference type="SMR" id="P77360"/>
<dbReference type="BioGRID" id="4261318">
    <property type="interactions" value="14"/>
</dbReference>
<dbReference type="FunCoup" id="P77360">
    <property type="interactions" value="71"/>
</dbReference>
<dbReference type="STRING" id="511145.b2545"/>
<dbReference type="PaxDb" id="511145-b2545"/>
<dbReference type="EnsemblBacteria" id="AAC75598">
    <property type="protein sequence ID" value="AAC75598"/>
    <property type="gene ID" value="b2545"/>
</dbReference>
<dbReference type="GeneID" id="947019"/>
<dbReference type="KEGG" id="ecj:JW5842"/>
<dbReference type="KEGG" id="eco:b2545"/>
<dbReference type="KEGG" id="ecoc:C3026_14095"/>
<dbReference type="PATRIC" id="fig|1411691.4.peg.4189"/>
<dbReference type="EchoBASE" id="EB3237"/>
<dbReference type="eggNOG" id="COG1063">
    <property type="taxonomic scope" value="Bacteria"/>
</dbReference>
<dbReference type="HOGENOM" id="CLU_026673_11_2_6"/>
<dbReference type="InParanoid" id="P77360"/>
<dbReference type="OMA" id="GEYRRCE"/>
<dbReference type="OrthoDB" id="9773078at2"/>
<dbReference type="PhylomeDB" id="P77360"/>
<dbReference type="BioCyc" id="EcoCyc:YPHC-MONOMER"/>
<dbReference type="PRO" id="PR:P77360"/>
<dbReference type="Proteomes" id="UP000000625">
    <property type="component" value="Chromosome"/>
</dbReference>
<dbReference type="GO" id="GO:0016616">
    <property type="term" value="F:oxidoreductase activity, acting on the CH-OH group of donors, NAD or NADP as acceptor"/>
    <property type="evidence" value="ECO:0007669"/>
    <property type="project" value="UniProtKB-ARBA"/>
</dbReference>
<dbReference type="GO" id="GO:0008270">
    <property type="term" value="F:zinc ion binding"/>
    <property type="evidence" value="ECO:0007669"/>
    <property type="project" value="InterPro"/>
</dbReference>
<dbReference type="CDD" id="cd08239">
    <property type="entry name" value="THR_DH_like"/>
    <property type="match status" value="1"/>
</dbReference>
<dbReference type="Gene3D" id="3.90.180.10">
    <property type="entry name" value="Medium-chain alcohol dehydrogenases, catalytic domain"/>
    <property type="match status" value="1"/>
</dbReference>
<dbReference type="Gene3D" id="3.40.50.720">
    <property type="entry name" value="NAD(P)-binding Rossmann-like Domain"/>
    <property type="match status" value="1"/>
</dbReference>
<dbReference type="InterPro" id="IPR013149">
    <property type="entry name" value="ADH-like_C"/>
</dbReference>
<dbReference type="InterPro" id="IPR013154">
    <property type="entry name" value="ADH-like_N"/>
</dbReference>
<dbReference type="InterPro" id="IPR002328">
    <property type="entry name" value="ADH_Zn_CS"/>
</dbReference>
<dbReference type="InterPro" id="IPR011032">
    <property type="entry name" value="GroES-like_sf"/>
</dbReference>
<dbReference type="InterPro" id="IPR036291">
    <property type="entry name" value="NAD(P)-bd_dom_sf"/>
</dbReference>
<dbReference type="InterPro" id="IPR020843">
    <property type="entry name" value="PKS_ER"/>
</dbReference>
<dbReference type="PANTHER" id="PTHR43350:SF19">
    <property type="entry name" value="D-GULOSIDE 3-DEHYDROGENASE"/>
    <property type="match status" value="1"/>
</dbReference>
<dbReference type="PANTHER" id="PTHR43350">
    <property type="entry name" value="NAD-DEPENDENT ALCOHOL DEHYDROGENASE"/>
    <property type="match status" value="1"/>
</dbReference>
<dbReference type="Pfam" id="PF08240">
    <property type="entry name" value="ADH_N"/>
    <property type="match status" value="1"/>
</dbReference>
<dbReference type="Pfam" id="PF00107">
    <property type="entry name" value="ADH_zinc_N"/>
    <property type="match status" value="1"/>
</dbReference>
<dbReference type="SMART" id="SM00829">
    <property type="entry name" value="PKS_ER"/>
    <property type="match status" value="1"/>
</dbReference>
<dbReference type="SUPFAM" id="SSF50129">
    <property type="entry name" value="GroES-like"/>
    <property type="match status" value="1"/>
</dbReference>
<dbReference type="SUPFAM" id="SSF51735">
    <property type="entry name" value="NAD(P)-binding Rossmann-fold domains"/>
    <property type="match status" value="1"/>
</dbReference>
<dbReference type="PROSITE" id="PS00059">
    <property type="entry name" value="ADH_ZINC"/>
    <property type="match status" value="1"/>
</dbReference>
<comment type="cofactor">
    <cofactor evidence="1">
        <name>Zn(2+)</name>
        <dbReference type="ChEBI" id="CHEBI:29105"/>
    </cofactor>
    <text evidence="1">Binds 2 Zn(2+) ions per subunit.</text>
</comment>
<comment type="similarity">
    <text evidence="2">Belongs to the zinc-containing alcohol dehydrogenase family.</text>
</comment>
<accession>P77360</accession>
<sequence>MKTMLAAYLPGNSTVDLREVAVPTPGINQVLIKMKSSGICGSDVHYIYHQHRATAAAPDKPLYQGFINGHEPCGQIVAMGQGCRHFKEGDRVLVYHISGCGFCPNCRRGFPISCTGEGKAAYGWQRDGGHAEYLLAEEKDLILLPDALSYEDGAFISCGVGTAYEGILRGEVSGSDNVLVVGLGPVGMMAMMLAKGRGAKRIIGVDMLPERLAMAKQLGVMDHGYLATTEGLPQIIAELTHGGADVALDCSGNAAGRLLALQSTADWGRVVYIGETGKVEFEVSADLMHHQRRIIGSWVTSLFHMEKCAHDLTDWKLWPRNAITHRFSLEQAGDAYALMASGKCGKVVINFPD</sequence>
<keyword id="KW-0479">Metal-binding</keyword>
<keyword id="KW-0560">Oxidoreductase</keyword>
<keyword id="KW-1185">Reference proteome</keyword>
<keyword id="KW-0862">Zinc</keyword>
<reference key="1">
    <citation type="journal article" date="1997" name="DNA Res.">
        <title>Construction of a contiguous 874-kb sequence of the Escherichia coli-K12 genome corresponding to 50.0-68.8 min on the linkage map and analysis of its sequence features.</title>
        <authorList>
            <person name="Yamamoto Y."/>
            <person name="Aiba H."/>
            <person name="Baba T."/>
            <person name="Hayashi K."/>
            <person name="Inada T."/>
            <person name="Isono K."/>
            <person name="Itoh T."/>
            <person name="Kimura S."/>
            <person name="Kitagawa M."/>
            <person name="Makino K."/>
            <person name="Miki T."/>
            <person name="Mitsuhashi N."/>
            <person name="Mizobuchi K."/>
            <person name="Mori H."/>
            <person name="Nakade S."/>
            <person name="Nakamura Y."/>
            <person name="Nashimoto H."/>
            <person name="Oshima T."/>
            <person name="Oyama S."/>
            <person name="Saito N."/>
            <person name="Sampei G."/>
            <person name="Satoh Y."/>
            <person name="Sivasundaram S."/>
            <person name="Tagami H."/>
            <person name="Takahashi H."/>
            <person name="Takeda J."/>
            <person name="Takemoto K."/>
            <person name="Uehara K."/>
            <person name="Wada C."/>
            <person name="Yamagata S."/>
            <person name="Horiuchi T."/>
        </authorList>
    </citation>
    <scope>NUCLEOTIDE SEQUENCE [LARGE SCALE GENOMIC DNA]</scope>
    <source>
        <strain>K12 / W3110 / ATCC 27325 / DSM 5911</strain>
    </source>
</reference>
<reference key="2">
    <citation type="journal article" date="1997" name="Science">
        <title>The complete genome sequence of Escherichia coli K-12.</title>
        <authorList>
            <person name="Blattner F.R."/>
            <person name="Plunkett G. III"/>
            <person name="Bloch C.A."/>
            <person name="Perna N.T."/>
            <person name="Burland V."/>
            <person name="Riley M."/>
            <person name="Collado-Vides J."/>
            <person name="Glasner J.D."/>
            <person name="Rode C.K."/>
            <person name="Mayhew G.F."/>
            <person name="Gregor J."/>
            <person name="Davis N.W."/>
            <person name="Kirkpatrick H.A."/>
            <person name="Goeden M.A."/>
            <person name="Rose D.J."/>
            <person name="Mau B."/>
            <person name="Shao Y."/>
        </authorList>
    </citation>
    <scope>NUCLEOTIDE SEQUENCE [LARGE SCALE GENOMIC DNA]</scope>
    <source>
        <strain>K12 / MG1655 / ATCC 47076</strain>
    </source>
</reference>
<reference key="3">
    <citation type="journal article" date="2006" name="Mol. Syst. Biol.">
        <title>Highly accurate genome sequences of Escherichia coli K-12 strains MG1655 and W3110.</title>
        <authorList>
            <person name="Hayashi K."/>
            <person name="Morooka N."/>
            <person name="Yamamoto Y."/>
            <person name="Fujita K."/>
            <person name="Isono K."/>
            <person name="Choi S."/>
            <person name="Ohtsubo E."/>
            <person name="Baba T."/>
            <person name="Wanner B.L."/>
            <person name="Mori H."/>
            <person name="Horiuchi T."/>
        </authorList>
    </citation>
    <scope>NUCLEOTIDE SEQUENCE [LARGE SCALE GENOMIC DNA]</scope>
    <source>
        <strain>K12 / W3110 / ATCC 27325 / DSM 5911</strain>
    </source>
</reference>